<evidence type="ECO:0000250" key="1"/>
<evidence type="ECO:0000250" key="2">
    <source>
        <dbReference type="UniProtKB" id="Q8C0V1"/>
    </source>
</evidence>
<evidence type="ECO:0000255" key="3"/>
<evidence type="ECO:0000256" key="4">
    <source>
        <dbReference type="SAM" id="MobiDB-lite"/>
    </source>
</evidence>
<evidence type="ECO:0000269" key="5">
    <source>
    </source>
</evidence>
<evidence type="ECO:0000269" key="6">
    <source>
    </source>
</evidence>
<evidence type="ECO:0000303" key="7">
    <source>
    </source>
</evidence>
<evidence type="ECO:0000303" key="8">
    <source>
    </source>
</evidence>
<evidence type="ECO:0000305" key="9"/>
<evidence type="ECO:0000312" key="10">
    <source>
        <dbReference type="HGNC" id="HGNC:26675"/>
    </source>
</evidence>
<evidence type="ECO:0007829" key="11">
    <source>
        <dbReference type="PDB" id="6J07"/>
    </source>
</evidence>
<sequence>MESEDTKKTQEMKTDLNLLLECLKYQMDNAFSQKEALVTIHSICQQNSNASVYFREIGGLMFVKNLAKSSEHSMVKEAALYTLGAIAEKNVYCQQTLCTSELFEDLTWFLSNDSNINLKRMSVYVILVLVSNNRTGQTLVRETGCITVLSRLFRTVISKHELDLSDKNVFQSYQLWSSVCSTLCVCVNNPQNDENQMFCCSLFPHANEWLKNCTTPEIIRPICSFIGLTLANNTYVQKYFVSVGGLDVLSQVLMQLESDSHETLSSAKLAVVVTKTVDACIADNPTFGIVLSKYHIVSKLLALLLHESLDSGEKFSIMLTLGHCTEDCEENQYDLFKNNGLPLMIQALTESQNEELNKAATFVLHNCKKITEKLSLSLGEYPFDENETQQLKDISVKENNLEEHWRKAKEILHRIEQLEREGNEEEIQRENYQDNISSMNISIQNTWKHLHADRIGRGSKAEDEDKSHSRQLQSYKSHGVMSKACTNDDQMKTPLKSANPVHACYRESEQNKTLYKAKSSCNQNLHEETTFEKNFVSQSSDHVFKHPVHIAKNIKQQLPVTDPFTLCSDIINKEVVSFLATPSCSEMLTYRCSGCIAVEKSLNSRNFSKLLHSCPYQCDRHKVIVEAEDRYKSELRKSLICNKKILLTPRRRQRLSNESTTPGGIKKRRIRKNFTEEEVNYLFNGVKKMGNHWNSILWSFPFQQGRKAVDLAHKYHKLTKHPTCAAS</sequence>
<proteinExistence type="evidence at protein level"/>
<organism>
    <name type="scientific">Homo sapiens</name>
    <name type="common">Human</name>
    <dbReference type="NCBI Taxonomy" id="9606"/>
    <lineage>
        <taxon>Eukaryota</taxon>
        <taxon>Metazoa</taxon>
        <taxon>Chordata</taxon>
        <taxon>Craniata</taxon>
        <taxon>Vertebrata</taxon>
        <taxon>Euteleostomi</taxon>
        <taxon>Mammalia</taxon>
        <taxon>Eutheria</taxon>
        <taxon>Euarchontoglires</taxon>
        <taxon>Primates</taxon>
        <taxon>Haplorrhini</taxon>
        <taxon>Catarrhini</taxon>
        <taxon>Hominidae</taxon>
        <taxon>Homo</taxon>
    </lineage>
</organism>
<reference key="1">
    <citation type="journal article" date="2004" name="Nat. Genet.">
        <title>Complete sequencing and characterization of 21,243 full-length human cDNAs.</title>
        <authorList>
            <person name="Ota T."/>
            <person name="Suzuki Y."/>
            <person name="Nishikawa T."/>
            <person name="Otsuki T."/>
            <person name="Sugiyama T."/>
            <person name="Irie R."/>
            <person name="Wakamatsu A."/>
            <person name="Hayashi K."/>
            <person name="Sato H."/>
            <person name="Nagai K."/>
            <person name="Kimura K."/>
            <person name="Makita H."/>
            <person name="Sekine M."/>
            <person name="Obayashi M."/>
            <person name="Nishi T."/>
            <person name="Shibahara T."/>
            <person name="Tanaka T."/>
            <person name="Ishii S."/>
            <person name="Yamamoto J."/>
            <person name="Saito K."/>
            <person name="Kawai Y."/>
            <person name="Isono Y."/>
            <person name="Nakamura Y."/>
            <person name="Nagahari K."/>
            <person name="Murakami K."/>
            <person name="Yasuda T."/>
            <person name="Iwayanagi T."/>
            <person name="Wagatsuma M."/>
            <person name="Shiratori A."/>
            <person name="Sudo H."/>
            <person name="Hosoiri T."/>
            <person name="Kaku Y."/>
            <person name="Kodaira H."/>
            <person name="Kondo H."/>
            <person name="Sugawara M."/>
            <person name="Takahashi M."/>
            <person name="Kanda K."/>
            <person name="Yokoi T."/>
            <person name="Furuya T."/>
            <person name="Kikkawa E."/>
            <person name="Omura Y."/>
            <person name="Abe K."/>
            <person name="Kamihara K."/>
            <person name="Katsuta N."/>
            <person name="Sato K."/>
            <person name="Tanikawa M."/>
            <person name="Yamazaki M."/>
            <person name="Ninomiya K."/>
            <person name="Ishibashi T."/>
            <person name="Yamashita H."/>
            <person name="Murakawa K."/>
            <person name="Fujimori K."/>
            <person name="Tanai H."/>
            <person name="Kimata M."/>
            <person name="Watanabe M."/>
            <person name="Hiraoka S."/>
            <person name="Chiba Y."/>
            <person name="Ishida S."/>
            <person name="Ono Y."/>
            <person name="Takiguchi S."/>
            <person name="Watanabe S."/>
            <person name="Yosida M."/>
            <person name="Hotuta T."/>
            <person name="Kusano J."/>
            <person name="Kanehori K."/>
            <person name="Takahashi-Fujii A."/>
            <person name="Hara H."/>
            <person name="Tanase T.-O."/>
            <person name="Nomura Y."/>
            <person name="Togiya S."/>
            <person name="Komai F."/>
            <person name="Hara R."/>
            <person name="Takeuchi K."/>
            <person name="Arita M."/>
            <person name="Imose N."/>
            <person name="Musashino K."/>
            <person name="Yuuki H."/>
            <person name="Oshima A."/>
            <person name="Sasaki N."/>
            <person name="Aotsuka S."/>
            <person name="Yoshikawa Y."/>
            <person name="Matsunawa H."/>
            <person name="Ichihara T."/>
            <person name="Shiohata N."/>
            <person name="Sano S."/>
            <person name="Moriya S."/>
            <person name="Momiyama H."/>
            <person name="Satoh N."/>
            <person name="Takami S."/>
            <person name="Terashima Y."/>
            <person name="Suzuki O."/>
            <person name="Nakagawa S."/>
            <person name="Senoh A."/>
            <person name="Mizoguchi H."/>
            <person name="Goto Y."/>
            <person name="Shimizu F."/>
            <person name="Wakebe H."/>
            <person name="Hishigaki H."/>
            <person name="Watanabe T."/>
            <person name="Sugiyama A."/>
            <person name="Takemoto M."/>
            <person name="Kawakami B."/>
            <person name="Yamazaki M."/>
            <person name="Watanabe K."/>
            <person name="Kumagai A."/>
            <person name="Itakura S."/>
            <person name="Fukuzumi Y."/>
            <person name="Fujimori Y."/>
            <person name="Komiyama M."/>
            <person name="Tashiro H."/>
            <person name="Tanigami A."/>
            <person name="Fujiwara T."/>
            <person name="Ono T."/>
            <person name="Yamada K."/>
            <person name="Fujii Y."/>
            <person name="Ozaki K."/>
            <person name="Hirao M."/>
            <person name="Ohmori Y."/>
            <person name="Kawabata A."/>
            <person name="Hikiji T."/>
            <person name="Kobatake N."/>
            <person name="Inagaki H."/>
            <person name="Ikema Y."/>
            <person name="Okamoto S."/>
            <person name="Okitani R."/>
            <person name="Kawakami T."/>
            <person name="Noguchi S."/>
            <person name="Itoh T."/>
            <person name="Shigeta K."/>
            <person name="Senba T."/>
            <person name="Matsumura K."/>
            <person name="Nakajima Y."/>
            <person name="Mizuno T."/>
            <person name="Morinaga M."/>
            <person name="Sasaki M."/>
            <person name="Togashi T."/>
            <person name="Oyama M."/>
            <person name="Hata H."/>
            <person name="Watanabe M."/>
            <person name="Komatsu T."/>
            <person name="Mizushima-Sugano J."/>
            <person name="Satoh T."/>
            <person name="Shirai Y."/>
            <person name="Takahashi Y."/>
            <person name="Nakagawa K."/>
            <person name="Okumura K."/>
            <person name="Nagase T."/>
            <person name="Nomura N."/>
            <person name="Kikuchi H."/>
            <person name="Masuho Y."/>
            <person name="Yamashita R."/>
            <person name="Nakai K."/>
            <person name="Yada T."/>
            <person name="Nakamura Y."/>
            <person name="Ohara O."/>
            <person name="Isogai T."/>
            <person name="Sugano S."/>
        </authorList>
    </citation>
    <scope>NUCLEOTIDE SEQUENCE [LARGE SCALE MRNA] (ISOFORM 3)</scope>
    <source>
        <tissue>Testis</tissue>
    </source>
</reference>
<reference key="2">
    <citation type="journal article" date="2004" name="Nature">
        <title>The sequence and analysis of duplication-rich human chromosome 16.</title>
        <authorList>
            <person name="Martin J."/>
            <person name="Han C."/>
            <person name="Gordon L.A."/>
            <person name="Terry A."/>
            <person name="Prabhakar S."/>
            <person name="She X."/>
            <person name="Xie G."/>
            <person name="Hellsten U."/>
            <person name="Chan Y.M."/>
            <person name="Altherr M."/>
            <person name="Couronne O."/>
            <person name="Aerts A."/>
            <person name="Bajorek E."/>
            <person name="Black S."/>
            <person name="Blumer H."/>
            <person name="Branscomb E."/>
            <person name="Brown N.C."/>
            <person name="Bruno W.J."/>
            <person name="Buckingham J.M."/>
            <person name="Callen D.F."/>
            <person name="Campbell C.S."/>
            <person name="Campbell M.L."/>
            <person name="Campbell E.W."/>
            <person name="Caoile C."/>
            <person name="Challacombe J.F."/>
            <person name="Chasteen L.A."/>
            <person name="Chertkov O."/>
            <person name="Chi H.C."/>
            <person name="Christensen M."/>
            <person name="Clark L.M."/>
            <person name="Cohn J.D."/>
            <person name="Denys M."/>
            <person name="Detter J.C."/>
            <person name="Dickson M."/>
            <person name="Dimitrijevic-Bussod M."/>
            <person name="Escobar J."/>
            <person name="Fawcett J.J."/>
            <person name="Flowers D."/>
            <person name="Fotopulos D."/>
            <person name="Glavina T."/>
            <person name="Gomez M."/>
            <person name="Gonzales E."/>
            <person name="Goodstein D."/>
            <person name="Goodwin L.A."/>
            <person name="Grady D.L."/>
            <person name="Grigoriev I."/>
            <person name="Groza M."/>
            <person name="Hammon N."/>
            <person name="Hawkins T."/>
            <person name="Haydu L."/>
            <person name="Hildebrand C.E."/>
            <person name="Huang W."/>
            <person name="Israni S."/>
            <person name="Jett J."/>
            <person name="Jewett P.B."/>
            <person name="Kadner K."/>
            <person name="Kimball H."/>
            <person name="Kobayashi A."/>
            <person name="Krawczyk M.-C."/>
            <person name="Leyba T."/>
            <person name="Longmire J.L."/>
            <person name="Lopez F."/>
            <person name="Lou Y."/>
            <person name="Lowry S."/>
            <person name="Ludeman T."/>
            <person name="Manohar C.F."/>
            <person name="Mark G.A."/>
            <person name="McMurray K.L."/>
            <person name="Meincke L.J."/>
            <person name="Morgan J."/>
            <person name="Moyzis R.K."/>
            <person name="Mundt M.O."/>
            <person name="Munk A.C."/>
            <person name="Nandkeshwar R.D."/>
            <person name="Pitluck S."/>
            <person name="Pollard M."/>
            <person name="Predki P."/>
            <person name="Parson-Quintana B."/>
            <person name="Ramirez L."/>
            <person name="Rash S."/>
            <person name="Retterer J."/>
            <person name="Ricke D.O."/>
            <person name="Robinson D.L."/>
            <person name="Rodriguez A."/>
            <person name="Salamov A."/>
            <person name="Saunders E.H."/>
            <person name="Scott D."/>
            <person name="Shough T."/>
            <person name="Stallings R.L."/>
            <person name="Stalvey M."/>
            <person name="Sutherland R.D."/>
            <person name="Tapia R."/>
            <person name="Tesmer J.G."/>
            <person name="Thayer N."/>
            <person name="Thompson L.S."/>
            <person name="Tice H."/>
            <person name="Torney D.C."/>
            <person name="Tran-Gyamfi M."/>
            <person name="Tsai M."/>
            <person name="Ulanovsky L.E."/>
            <person name="Ustaszewska A."/>
            <person name="Vo N."/>
            <person name="White P.S."/>
            <person name="Williams A.L."/>
            <person name="Wills P.L."/>
            <person name="Wu J.-R."/>
            <person name="Wu K."/>
            <person name="Yang J."/>
            <person name="DeJong P."/>
            <person name="Bruce D."/>
            <person name="Doggett N.A."/>
            <person name="Deaven L."/>
            <person name="Schmutz J."/>
            <person name="Grimwood J."/>
            <person name="Richardson P."/>
            <person name="Rokhsar D.S."/>
            <person name="Eichler E.E."/>
            <person name="Gilna P."/>
            <person name="Lucas S.M."/>
            <person name="Myers R.M."/>
            <person name="Rubin E.M."/>
            <person name="Pennacchio L.A."/>
        </authorList>
    </citation>
    <scope>NUCLEOTIDE SEQUENCE [LARGE SCALE GENOMIC DNA]</scope>
</reference>
<reference key="3">
    <citation type="journal article" date="2004" name="Genome Res.">
        <title>The status, quality, and expansion of the NIH full-length cDNA project: the Mammalian Gene Collection (MGC).</title>
        <authorList>
            <consortium name="The MGC Project Team"/>
        </authorList>
    </citation>
    <scope>NUCLEOTIDE SEQUENCE [LARGE SCALE MRNA] (ISOFORM 2)</scope>
</reference>
<reference key="4">
    <citation type="journal article" date="2020" name="Genet. Med.">
        <title>Genetic dissection of spermatogenic arrest through exome analysis: clinical implications for the management of azoospermic men.</title>
        <authorList>
            <person name="Krausz C."/>
            <person name="Riera-Escamilla A."/>
            <person name="Moreno-Mendoza D."/>
            <person name="Holleman K."/>
            <person name="Cioppi F."/>
            <person name="Algaba F."/>
            <person name="Pybus M."/>
            <person name="Friedrich C."/>
            <person name="Wyrwoll M.J."/>
            <person name="Casamonti E."/>
            <person name="Pietroforte S."/>
            <person name="Nagirnaja L."/>
            <person name="Lopes A.M."/>
            <person name="Kliesch S."/>
            <person name="Pilatz A."/>
            <person name="Carrell D.T."/>
            <person name="Conrad D.F."/>
            <person name="Ars E."/>
            <person name="Ruiz-Castane E."/>
            <person name="Aston K.I."/>
            <person name="Baarends W.M."/>
            <person name="Tuettelmann F."/>
        </authorList>
    </citation>
    <scope>VARIANTS SPGF60 VAL-79 AND 605-ARG--SER-727 DEL</scope>
    <scope>INVOLVEMENT IN SPGF60</scope>
</reference>
<reference key="5">
    <citation type="journal article" date="2021" name="Hum. Genet.">
        <title>Disruption of human meiotic telomere complex genes TERB1, TERB2 and MAJIN in men with non-obstructive azoospermia.</title>
        <authorList>
            <consortium name="GEMINI Consortium"/>
            <person name="Salas-Huetos A."/>
            <person name="Tuettelmann F."/>
            <person name="Wyrwoll M.J."/>
            <person name="Kliesch S."/>
            <person name="Lopes A.M."/>
            <person name="Goncalves J."/>
            <person name="Boyden S.E."/>
            <person name="Woeste M."/>
            <person name="Hotaling J.M."/>
            <person name="Nagirnaja L."/>
            <person name="Conrad D.F."/>
            <person name="Carrell D.T."/>
            <person name="Aston K.I."/>
        </authorList>
    </citation>
    <scope>VARIANTS SPGF60 GLY-326 AND 568-SER--SER-727 DEL</scope>
    <scope>INVOLVEMENT IN SPGF60</scope>
</reference>
<reference key="6">
    <citation type="journal article" date="2021" name="Hum. Genet.">
        <authorList>
            <consortium name="GEMINI Consortium"/>
            <person name="Salas-Huetos A."/>
            <person name="Tuettelmann F."/>
            <person name="Wyrwoll M.J."/>
            <person name="Kliesch S."/>
            <person name="Lopes A.M."/>
            <person name="Goncalves J."/>
            <person name="Boyden S.E."/>
            <person name="Woeste M."/>
            <person name="Hotaling J.M."/>
            <person name="Nagirnaja L."/>
            <person name="Conrad D.F."/>
            <person name="Carrell D.T."/>
            <person name="Aston K.I."/>
        </authorList>
    </citation>
    <scope>ERRATUM OF PUBMED:33211200</scope>
</reference>
<protein>
    <recommendedName>
        <fullName evidence="2">Telomere repeats-binding bouquet formation protein 1</fullName>
    </recommendedName>
    <alternativeName>
        <fullName evidence="10">Coiled-coil domain-containing protein 79</fullName>
    </alternativeName>
</protein>
<feature type="chain" id="PRO_0000320156" description="Telomere repeats-binding bouquet formation protein 1">
    <location>
        <begin position="1"/>
        <end position="727"/>
    </location>
</feature>
<feature type="repeat" description="ARM 1">
    <location>
        <begin position="101"/>
        <end position="144"/>
    </location>
</feature>
<feature type="repeat" description="ARM 2">
    <location>
        <begin position="339"/>
        <end position="382"/>
    </location>
</feature>
<feature type="domain" description="Myb-like">
    <location>
        <begin position="666"/>
        <end position="719"/>
    </location>
</feature>
<feature type="region of interest" description="Disordered" evidence="4">
    <location>
        <begin position="457"/>
        <end position="493"/>
    </location>
</feature>
<feature type="region of interest" description="Interaction with TERF1" evidence="1">
    <location>
        <begin position="523"/>
        <end position="662"/>
    </location>
</feature>
<feature type="coiled-coil region" evidence="3">
    <location>
        <begin position="398"/>
        <end position="446"/>
    </location>
</feature>
<feature type="compositionally biased region" description="Basic and acidic residues" evidence="4">
    <location>
        <begin position="457"/>
        <end position="468"/>
    </location>
</feature>
<feature type="modified residue" description="Phosphothreonine" evidence="2">
    <location>
        <position position="648"/>
    </location>
</feature>
<feature type="splice variant" id="VSP_031613" description="In isoform 3." evidence="7">
    <original>EENQYDLFKNNGLPLMIQALTESQNEELNKAATFVLHNCKKIT</original>
    <variation>A</variation>
    <location>
        <begin position="329"/>
        <end position="371"/>
    </location>
</feature>
<feature type="splice variant" id="VSP_031614" description="In isoform 2 and isoform 3." evidence="7 8">
    <original>SDHVFKHPVHI</original>
    <variation>RSIYIMFRYNK</variation>
    <location>
        <begin position="540"/>
        <end position="550"/>
    </location>
</feature>
<feature type="splice variant" id="VSP_031615" description="In isoform 2 and isoform 3." evidence="7 8">
    <location>
        <begin position="551"/>
        <end position="727"/>
    </location>
</feature>
<feature type="sequence variant" id="VAR_087422" description="In SPGF60; uncertain significance." evidence="5">
    <original>A</original>
    <variation>V</variation>
    <location>
        <position position="79"/>
    </location>
</feature>
<feature type="sequence variant" id="VAR_086535" description="In SPGF60; uncertain significance." evidence="6">
    <original>E</original>
    <variation>G</variation>
    <location>
        <position position="326"/>
    </location>
</feature>
<feature type="sequence variant" id="VAR_086536" description="In SPGF60." evidence="6">
    <location>
        <begin position="568"/>
        <end position="727"/>
    </location>
</feature>
<feature type="sequence variant" id="VAR_087423" description="In SPGF60." evidence="5">
    <location>
        <begin position="605"/>
        <end position="727"/>
    </location>
</feature>
<feature type="turn" evidence="11">
    <location>
        <begin position="593"/>
        <end position="595"/>
    </location>
</feature>
<feature type="turn" evidence="11">
    <location>
        <begin position="604"/>
        <end position="606"/>
    </location>
</feature>
<feature type="helix" evidence="11">
    <location>
        <begin position="607"/>
        <end position="613"/>
    </location>
</feature>
<feature type="helix" evidence="11">
    <location>
        <begin position="619"/>
        <end position="641"/>
    </location>
</feature>
<feature type="strand" evidence="11">
    <location>
        <begin position="642"/>
        <end position="644"/>
    </location>
</feature>
<gene>
    <name evidence="10" type="primary">TERB1</name>
    <name evidence="10" type="synonym">CCDC79</name>
</gene>
<dbReference type="EMBL" id="AK093213">
    <property type="protein sequence ID" value="BAC04098.1"/>
    <property type="molecule type" value="mRNA"/>
</dbReference>
<dbReference type="EMBL" id="AC044802">
    <property type="status" value="NOT_ANNOTATED_CDS"/>
    <property type="molecule type" value="Genomic_DNA"/>
</dbReference>
<dbReference type="EMBL" id="BC126109">
    <property type="protein sequence ID" value="AAI26110.1"/>
    <property type="molecule type" value="mRNA"/>
</dbReference>
<dbReference type="RefSeq" id="NP_001129977.1">
    <molecule id="Q8NA31-1"/>
    <property type="nucleotide sequence ID" value="NM_001136505.2"/>
</dbReference>
<dbReference type="RefSeq" id="XP_011521306.1">
    <property type="nucleotide sequence ID" value="XM_011523004.2"/>
</dbReference>
<dbReference type="RefSeq" id="XP_011521307.1">
    <molecule id="Q8NA31-1"/>
    <property type="nucleotide sequence ID" value="XM_011523005.3"/>
</dbReference>
<dbReference type="RefSeq" id="XP_011521308.1">
    <property type="nucleotide sequence ID" value="XM_011523006.2"/>
</dbReference>
<dbReference type="RefSeq" id="XP_011521309.1">
    <property type="nucleotide sequence ID" value="XM_011523007.2"/>
</dbReference>
<dbReference type="RefSeq" id="XP_011521310.1">
    <molecule id="Q8NA31-1"/>
    <property type="nucleotide sequence ID" value="XM_011523008.3"/>
</dbReference>
<dbReference type="RefSeq" id="XP_011521311.1">
    <molecule id="Q8NA31-1"/>
    <property type="nucleotide sequence ID" value="XM_011523009.3"/>
</dbReference>
<dbReference type="RefSeq" id="XP_011521320.1">
    <property type="nucleotide sequence ID" value="XM_011523018.1"/>
</dbReference>
<dbReference type="RefSeq" id="XP_047289902.1">
    <molecule id="Q8NA31-1"/>
    <property type="nucleotide sequence ID" value="XM_047433946.1"/>
</dbReference>
<dbReference type="RefSeq" id="XP_047289903.1">
    <molecule id="Q8NA31-1"/>
    <property type="nucleotide sequence ID" value="XM_047433947.1"/>
</dbReference>
<dbReference type="RefSeq" id="XP_047289904.1">
    <molecule id="Q8NA31-1"/>
    <property type="nucleotide sequence ID" value="XM_047433948.1"/>
</dbReference>
<dbReference type="RefSeq" id="XP_054236058.1">
    <molecule id="Q8NA31-1"/>
    <property type="nucleotide sequence ID" value="XM_054380083.1"/>
</dbReference>
<dbReference type="RefSeq" id="XP_054236059.1">
    <molecule id="Q8NA31-1"/>
    <property type="nucleotide sequence ID" value="XM_054380084.1"/>
</dbReference>
<dbReference type="RefSeq" id="XP_054236060.1">
    <molecule id="Q8NA31-1"/>
    <property type="nucleotide sequence ID" value="XM_054380085.1"/>
</dbReference>
<dbReference type="RefSeq" id="XP_054236061.1">
    <molecule id="Q8NA31-1"/>
    <property type="nucleotide sequence ID" value="XM_054380086.1"/>
</dbReference>
<dbReference type="RefSeq" id="XP_054236062.1">
    <molecule id="Q8NA31-1"/>
    <property type="nucleotide sequence ID" value="XM_054380087.1"/>
</dbReference>
<dbReference type="RefSeq" id="XP_054236063.1">
    <molecule id="Q8NA31-1"/>
    <property type="nucleotide sequence ID" value="XM_054380088.1"/>
</dbReference>
<dbReference type="PDB" id="5WIR">
    <property type="method" value="X-ray"/>
    <property type="resolution" value="2.10 A"/>
    <property type="chains" value="C/D=642-656"/>
</dbReference>
<dbReference type="PDB" id="5XUP">
    <property type="method" value="X-ray"/>
    <property type="resolution" value="2.10 A"/>
    <property type="chains" value="C/D=644-655"/>
</dbReference>
<dbReference type="PDB" id="6J07">
    <property type="method" value="X-ray"/>
    <property type="resolution" value="3.30 A"/>
    <property type="chains" value="B=590-649"/>
</dbReference>
<dbReference type="PDBsum" id="5WIR"/>
<dbReference type="PDBsum" id="5XUP"/>
<dbReference type="PDBsum" id="6J07"/>
<dbReference type="SMR" id="Q8NA31"/>
<dbReference type="BioGRID" id="129681">
    <property type="interactions" value="1"/>
</dbReference>
<dbReference type="FunCoup" id="Q8NA31">
    <property type="interactions" value="43"/>
</dbReference>
<dbReference type="IntAct" id="Q8NA31">
    <property type="interactions" value="1"/>
</dbReference>
<dbReference type="STRING" id="9606.ENSP00000463762"/>
<dbReference type="GlyGen" id="Q8NA31">
    <property type="glycosylation" value="2 sites, 1 N-linked glycan (1 site)"/>
</dbReference>
<dbReference type="iPTMnet" id="Q8NA31"/>
<dbReference type="PhosphoSitePlus" id="Q8NA31"/>
<dbReference type="BioMuta" id="TERB1"/>
<dbReference type="DMDM" id="322510134"/>
<dbReference type="jPOST" id="Q8NA31"/>
<dbReference type="MassIVE" id="Q8NA31"/>
<dbReference type="PaxDb" id="9606-ENSP00000463762"/>
<dbReference type="PeptideAtlas" id="Q8NA31"/>
<dbReference type="ProteomicsDB" id="72629">
    <molecule id="Q8NA31-1"/>
</dbReference>
<dbReference type="ProteomicsDB" id="72630">
    <molecule id="Q8NA31-2"/>
</dbReference>
<dbReference type="ProteomicsDB" id="72631">
    <molecule id="Q8NA31-3"/>
</dbReference>
<dbReference type="Antibodypedia" id="72088">
    <property type="antibodies" value="44 antibodies from 9 providers"/>
</dbReference>
<dbReference type="DNASU" id="283847"/>
<dbReference type="Ensembl" id="ENST00000313294.7">
    <molecule id="Q8NA31-3"/>
    <property type="protein sequence ID" value="ENSP00000464579.1"/>
    <property type="gene ID" value="ENSG00000249961.10"/>
</dbReference>
<dbReference type="Ensembl" id="ENST00000433154.6">
    <molecule id="Q8NA31-1"/>
    <property type="protein sequence ID" value="ENSP00000463762.1"/>
    <property type="gene ID" value="ENSG00000249961.10"/>
</dbReference>
<dbReference type="Ensembl" id="ENST00000558713.6">
    <molecule id="Q8NA31-1"/>
    <property type="protein sequence ID" value="ENSP00000462883.1"/>
    <property type="gene ID" value="ENSG00000249961.10"/>
</dbReference>
<dbReference type="GeneID" id="283847"/>
<dbReference type="KEGG" id="hsa:283847"/>
<dbReference type="MANE-Select" id="ENST00000433154.6">
    <property type="protein sequence ID" value="ENSP00000463762.1"/>
    <property type="RefSeq nucleotide sequence ID" value="NM_001136505.2"/>
    <property type="RefSeq protein sequence ID" value="NP_001129977.1"/>
</dbReference>
<dbReference type="UCSC" id="uc002eqc.2">
    <molecule id="Q8NA31-1"/>
    <property type="organism name" value="human"/>
</dbReference>
<dbReference type="AGR" id="HGNC:26675"/>
<dbReference type="CTD" id="283847"/>
<dbReference type="DisGeNET" id="283847"/>
<dbReference type="GeneCards" id="TERB1"/>
<dbReference type="HGNC" id="HGNC:26675">
    <property type="gene designation" value="TERB1"/>
</dbReference>
<dbReference type="HPA" id="ENSG00000249961">
    <property type="expression patterns" value="Tissue enriched (testis)"/>
</dbReference>
<dbReference type="MalaCards" id="TERB1"/>
<dbReference type="MIM" id="617332">
    <property type="type" value="gene"/>
</dbReference>
<dbReference type="MIM" id="619646">
    <property type="type" value="phenotype"/>
</dbReference>
<dbReference type="neXtProt" id="NX_Q8NA31"/>
<dbReference type="OpenTargets" id="ENSG00000249961"/>
<dbReference type="Orphanet" id="399805">
    <property type="disease" value="Male infertility with azoospermia or oligozoospermia due to single gene mutation"/>
</dbReference>
<dbReference type="VEuPathDB" id="HostDB:ENSG00000249961"/>
<dbReference type="eggNOG" id="ENOG502QQER">
    <property type="taxonomic scope" value="Eukaryota"/>
</dbReference>
<dbReference type="GeneTree" id="ENSGT00390000005075"/>
<dbReference type="HOGENOM" id="CLU_022991_1_0_1"/>
<dbReference type="InParanoid" id="Q8NA31"/>
<dbReference type="OMA" id="ECLKHQM"/>
<dbReference type="OrthoDB" id="608866at2759"/>
<dbReference type="PAN-GO" id="Q8NA31">
    <property type="GO annotations" value="2 GO annotations based on evolutionary models"/>
</dbReference>
<dbReference type="PhylomeDB" id="Q8NA31"/>
<dbReference type="TreeFam" id="TF335845"/>
<dbReference type="PathwayCommons" id="Q8NA31"/>
<dbReference type="SignaLink" id="Q8NA31"/>
<dbReference type="SIGNOR" id="Q8NA31"/>
<dbReference type="BioGRID-ORCS" id="283847">
    <property type="hits" value="4 hits in 328 CRISPR screens"/>
</dbReference>
<dbReference type="ChiTaRS" id="TERB1">
    <property type="organism name" value="human"/>
</dbReference>
<dbReference type="GenomeRNAi" id="283847"/>
<dbReference type="Pharos" id="Q8NA31">
    <property type="development level" value="Tdark"/>
</dbReference>
<dbReference type="PRO" id="PR:Q8NA31"/>
<dbReference type="Proteomes" id="UP000005640">
    <property type="component" value="Chromosome 16"/>
</dbReference>
<dbReference type="RNAct" id="Q8NA31">
    <property type="molecule type" value="protein"/>
</dbReference>
<dbReference type="Bgee" id="ENSG00000249961">
    <property type="expression patterns" value="Expressed in male germ line stem cell (sensu Vertebrata) in testis and 100 other cell types or tissues"/>
</dbReference>
<dbReference type="ExpressionAtlas" id="Q8NA31">
    <property type="expression patterns" value="baseline and differential"/>
</dbReference>
<dbReference type="GO" id="GO:0000781">
    <property type="term" value="C:chromosome, telomeric region"/>
    <property type="evidence" value="ECO:0000250"/>
    <property type="project" value="UniProtKB"/>
</dbReference>
<dbReference type="GO" id="GO:0005637">
    <property type="term" value="C:nuclear inner membrane"/>
    <property type="evidence" value="ECO:0000250"/>
    <property type="project" value="UniProtKB"/>
</dbReference>
<dbReference type="GO" id="GO:0070187">
    <property type="term" value="C:shelterin complex"/>
    <property type="evidence" value="ECO:0007669"/>
    <property type="project" value="Ensembl"/>
</dbReference>
<dbReference type="GO" id="GO:1990918">
    <property type="term" value="P:double-strand break repair involved in meiotic recombination"/>
    <property type="evidence" value="ECO:0007669"/>
    <property type="project" value="Ensembl"/>
</dbReference>
<dbReference type="GO" id="GO:0007129">
    <property type="term" value="P:homologous chromosome pairing at meiosis"/>
    <property type="evidence" value="ECO:0000250"/>
    <property type="project" value="UniProtKB"/>
</dbReference>
<dbReference type="GO" id="GO:0070197">
    <property type="term" value="P:meiotic attachment of telomere to nuclear envelope"/>
    <property type="evidence" value="ECO:0000250"/>
    <property type="project" value="UniProtKB"/>
</dbReference>
<dbReference type="GO" id="GO:0045141">
    <property type="term" value="P:meiotic telomere clustering"/>
    <property type="evidence" value="ECO:0000250"/>
    <property type="project" value="UniProtKB"/>
</dbReference>
<dbReference type="CDD" id="cd11658">
    <property type="entry name" value="SANT_DMAP1_like"/>
    <property type="match status" value="1"/>
</dbReference>
<dbReference type="FunFam" id="1.25.10.10:FF:000637">
    <property type="entry name" value="Telomere repeat binding bouquet formation protein 1"/>
    <property type="match status" value="1"/>
</dbReference>
<dbReference type="FunFam" id="1.25.10.10:FF:001462">
    <property type="entry name" value="Telomere repeat binding bouquet formation protein 1"/>
    <property type="match status" value="1"/>
</dbReference>
<dbReference type="FunFam" id="1.10.10.60:FF:000569">
    <property type="entry name" value="telomere repeats-binding bouquet formation protein 1"/>
    <property type="match status" value="1"/>
</dbReference>
<dbReference type="Gene3D" id="1.10.10.60">
    <property type="entry name" value="Homeodomain-like"/>
    <property type="match status" value="1"/>
</dbReference>
<dbReference type="Gene3D" id="1.25.10.10">
    <property type="entry name" value="Leucine-rich Repeat Variant"/>
    <property type="match status" value="2"/>
</dbReference>
<dbReference type="InterPro" id="IPR011989">
    <property type="entry name" value="ARM-like"/>
</dbReference>
<dbReference type="InterPro" id="IPR016024">
    <property type="entry name" value="ARM-type_fold"/>
</dbReference>
<dbReference type="InterPro" id="IPR009057">
    <property type="entry name" value="Homeodomain-like_sf"/>
</dbReference>
<dbReference type="InterPro" id="IPR001005">
    <property type="entry name" value="SANT/Myb"/>
</dbReference>
<dbReference type="InterPro" id="IPR042359">
    <property type="entry name" value="TERB1"/>
</dbReference>
<dbReference type="PANTHER" id="PTHR14014">
    <property type="entry name" value="TELOMERE REPEATS-BINDING BOUQUET FORMATION PROTEIN 1"/>
    <property type="match status" value="1"/>
</dbReference>
<dbReference type="PANTHER" id="PTHR14014:SF0">
    <property type="entry name" value="TELOMERE REPEATS-BINDING BOUQUET FORMATION PROTEIN 1"/>
    <property type="match status" value="1"/>
</dbReference>
<dbReference type="Pfam" id="PF00249">
    <property type="entry name" value="Myb_DNA-binding"/>
    <property type="match status" value="1"/>
</dbReference>
<dbReference type="SMART" id="SM00717">
    <property type="entry name" value="SANT"/>
    <property type="match status" value="1"/>
</dbReference>
<dbReference type="SUPFAM" id="SSF48371">
    <property type="entry name" value="ARM repeat"/>
    <property type="match status" value="1"/>
</dbReference>
<dbReference type="SUPFAM" id="SSF46689">
    <property type="entry name" value="Homeodomain-like"/>
    <property type="match status" value="1"/>
</dbReference>
<name>TERB1_HUMAN</name>
<keyword id="KW-0002">3D-structure</keyword>
<keyword id="KW-0025">Alternative splicing</keyword>
<keyword id="KW-0158">Chromosome</keyword>
<keyword id="KW-0175">Coiled coil</keyword>
<keyword id="KW-0225">Disease variant</keyword>
<keyword id="KW-0469">Meiosis</keyword>
<keyword id="KW-0472">Membrane</keyword>
<keyword id="KW-0539">Nucleus</keyword>
<keyword id="KW-0597">Phosphoprotein</keyword>
<keyword id="KW-1267">Proteomics identification</keyword>
<keyword id="KW-1185">Reference proteome</keyword>
<keyword id="KW-0677">Repeat</keyword>
<keyword id="KW-0779">Telomere</keyword>
<accession>Q8NA31</accession>
<accession>A0AUW1</accession>
<comment type="function">
    <text evidence="2">Meiosis-specific telomere-associated protein involved in meiotic telomere attachment to the nucleus inner membrane, a crucial step for homologous pairing and synapsis. Component of the MAJIN-TERB1-TERB2 complex, which promotes telomere cap exchange by mediating attachment of telomeric DNA to the inner nuclear membrane and replacement of the protective cap of telomeric chromosomes: in early meiosis, the MAJIN-TERB1-TERB2 complex associates with telomeric DNA and the shelterin/telosome complex. During prophase, the complex matures and promotes release of the shelterin/telosome complex from telomeric DNA. In the MAJIN-TERB1-TERB2 complex, TERB1 probably mediates association with the shelterin/telosome complex via interaction with TERF1, promoting priming telomeric DNA attachment'. Promotes telomere association with the nuclear envelope and deposition of the SUN-KASH/LINC complex. Also recruits cohesin to telomeres to develop structural rigidity.</text>
</comment>
<comment type="subunit">
    <text evidence="2">Component of the MAJIN-TERB1-TERB2 complex, composed of MAJIN, TERB1 and TERB2. Interacts with TERF1, STAG3 and SUN1. Interacts (via Myb-like domain) with the cohesin complex; probably mediated via interaction with STAG3.</text>
</comment>
<comment type="interaction">
    <interactant intactId="EBI-21942840">
        <id>Q8NA31</id>
    </interactant>
    <interactant intactId="EBI-710997">
        <id>P54274</id>
        <label>TERF1</label>
    </interactant>
    <organismsDiffer>false</organismsDiffer>
    <experiments>4</experiments>
</comment>
<comment type="subcellular location">
    <subcellularLocation>
        <location evidence="2">Chromosome</location>
        <location evidence="2">Telomere</location>
    </subcellularLocation>
    <subcellularLocation>
        <location evidence="2">Nucleus inner membrane</location>
    </subcellularLocation>
    <text evidence="2">Localizes to telomeres during meiotic prophase. In leptotene spermatocytes, localizes to telomeres that localize to the nucleus inner membrane.</text>
</comment>
<comment type="alternative products">
    <event type="alternative splicing"/>
    <isoform>
        <id>Q8NA31-1</id>
        <name>1</name>
        <sequence type="displayed"/>
    </isoform>
    <isoform>
        <id>Q8NA31-2</id>
        <name>2</name>
        <sequence type="described" ref="VSP_031614 VSP_031615"/>
    </isoform>
    <isoform>
        <id>Q8NA31-3</id>
        <name>3</name>
        <sequence type="described" ref="VSP_031613 VSP_031614 VSP_031615"/>
    </isoform>
</comment>
<comment type="PTM">
    <text evidence="2">Phosphorylated by CDK. Phosphorylation by CDK takes place in late prophase when the cap exchange is prominent. is important for the stabilization of telomere attachment but dispenable for the cap exchange.</text>
</comment>
<comment type="disease" evidence="5 6">
    <disease id="DI-06205">
        <name>Spermatogenic failure 60</name>
        <acronym>SPGF60</acronym>
        <description>An autosomal recessive male infertility disorder characterized by non-obstructive azoospermia, due to sperm maturation arrest before the pachytene stage.</description>
        <dbReference type="MIM" id="619646"/>
    </disease>
    <text>The disease is caused by variants affecting the gene represented in this entry.</text>
</comment>
<comment type="similarity">
    <text evidence="9">Belongs to the TERB1 family.</text>
</comment>